<organism>
    <name type="scientific">Oncorhynchus mykiss</name>
    <name type="common">Rainbow trout</name>
    <name type="synonym">Salmo gairdneri</name>
    <dbReference type="NCBI Taxonomy" id="8022"/>
    <lineage>
        <taxon>Eukaryota</taxon>
        <taxon>Metazoa</taxon>
        <taxon>Chordata</taxon>
        <taxon>Craniata</taxon>
        <taxon>Vertebrata</taxon>
        <taxon>Euteleostomi</taxon>
        <taxon>Actinopterygii</taxon>
        <taxon>Neopterygii</taxon>
        <taxon>Teleostei</taxon>
        <taxon>Protacanthopterygii</taxon>
        <taxon>Salmoniformes</taxon>
        <taxon>Salmonidae</taxon>
        <taxon>Salmoninae</taxon>
        <taxon>Oncorhynchus</taxon>
    </lineage>
</organism>
<comment type="function">
    <text evidence="1">Core subunit of the mitochondrial membrane respiratory chain NADH dehydrogenase (Complex I) that is believed to belong to the minimal assembly required for catalysis. Complex I functions in the transfer of electrons from NADH to the respiratory chain. The immediate electron acceptor for the enzyme is believed to be ubiquinone (By similarity).</text>
</comment>
<comment type="catalytic activity">
    <reaction>
        <text>a ubiquinone + NADH + 5 H(+)(in) = a ubiquinol + NAD(+) + 4 H(+)(out)</text>
        <dbReference type="Rhea" id="RHEA:29091"/>
        <dbReference type="Rhea" id="RHEA-COMP:9565"/>
        <dbReference type="Rhea" id="RHEA-COMP:9566"/>
        <dbReference type="ChEBI" id="CHEBI:15378"/>
        <dbReference type="ChEBI" id="CHEBI:16389"/>
        <dbReference type="ChEBI" id="CHEBI:17976"/>
        <dbReference type="ChEBI" id="CHEBI:57540"/>
        <dbReference type="ChEBI" id="CHEBI:57945"/>
        <dbReference type="EC" id="7.1.1.2"/>
    </reaction>
</comment>
<comment type="subcellular location">
    <subcellularLocation>
        <location>Mitochondrion inner membrane</location>
        <topology>Multi-pass membrane protein</topology>
    </subcellularLocation>
</comment>
<comment type="similarity">
    <text evidence="3">Belongs to the complex I subunit 2 family.</text>
</comment>
<gene>
    <name type="primary">MT-ND2</name>
    <name type="synonym">MTND2</name>
    <name type="synonym">NADH2</name>
    <name type="synonym">ND2</name>
</gene>
<proteinExistence type="inferred from homology"/>
<protein>
    <recommendedName>
        <fullName>NADH-ubiquinone oxidoreductase chain 2</fullName>
        <ecNumber>7.1.1.2</ecNumber>
    </recommendedName>
    <alternativeName>
        <fullName>NADH dehydrogenase subunit 2</fullName>
    </alternativeName>
</protein>
<reference key="1">
    <citation type="journal article" date="1995" name="J. Mol. Evol.">
        <title>The complete nucleotide sequence of the mitochondrial DNA genome of the rainbow trout, Oncorhynchus mykiss.</title>
        <authorList>
            <person name="Zardoya R."/>
            <person name="Garrido-Pertierra A."/>
            <person name="Bautista J.M."/>
        </authorList>
    </citation>
    <scope>NUCLEOTIDE SEQUENCE [GENOMIC DNA]</scope>
    <source>
        <tissue>Liver</tissue>
    </source>
</reference>
<keyword id="KW-0249">Electron transport</keyword>
<keyword id="KW-0472">Membrane</keyword>
<keyword id="KW-0496">Mitochondrion</keyword>
<keyword id="KW-0999">Mitochondrion inner membrane</keyword>
<keyword id="KW-0520">NAD</keyword>
<keyword id="KW-0679">Respiratory chain</keyword>
<keyword id="KW-1278">Translocase</keyword>
<keyword id="KW-0812">Transmembrane</keyword>
<keyword id="KW-1133">Transmembrane helix</keyword>
<keyword id="KW-0813">Transport</keyword>
<keyword id="KW-0830">Ubiquinone</keyword>
<geneLocation type="mitochondrion"/>
<evidence type="ECO:0000250" key="1"/>
<evidence type="ECO:0000255" key="2"/>
<evidence type="ECO:0000305" key="3"/>
<name>NU2M_ONCMY</name>
<dbReference type="EC" id="7.1.1.2"/>
<dbReference type="EMBL" id="L29771">
    <property type="protein sequence ID" value="AAB03348.1"/>
    <property type="molecule type" value="Genomic_DNA"/>
</dbReference>
<dbReference type="PIR" id="T09858">
    <property type="entry name" value="T09858"/>
</dbReference>
<dbReference type="RefSeq" id="NP_008291.1">
    <property type="nucleotide sequence ID" value="NC_001717.1"/>
</dbReference>
<dbReference type="SMR" id="P48175"/>
<dbReference type="GeneID" id="807979"/>
<dbReference type="KEGG" id="omy:807979"/>
<dbReference type="CTD" id="4536"/>
<dbReference type="OrthoDB" id="4092844at2759"/>
<dbReference type="Proteomes" id="UP000694395">
    <property type="component" value="Unplaced"/>
</dbReference>
<dbReference type="GO" id="GO:0005743">
    <property type="term" value="C:mitochondrial inner membrane"/>
    <property type="evidence" value="ECO:0007669"/>
    <property type="project" value="UniProtKB-SubCell"/>
</dbReference>
<dbReference type="GO" id="GO:0008137">
    <property type="term" value="F:NADH dehydrogenase (ubiquinone) activity"/>
    <property type="evidence" value="ECO:0007669"/>
    <property type="project" value="UniProtKB-EC"/>
</dbReference>
<dbReference type="GO" id="GO:0006120">
    <property type="term" value="P:mitochondrial electron transport, NADH to ubiquinone"/>
    <property type="evidence" value="ECO:0007669"/>
    <property type="project" value="InterPro"/>
</dbReference>
<dbReference type="InterPro" id="IPR050175">
    <property type="entry name" value="Complex_I_Subunit_2"/>
</dbReference>
<dbReference type="InterPro" id="IPR010933">
    <property type="entry name" value="NADH_DH_su2_C"/>
</dbReference>
<dbReference type="InterPro" id="IPR003917">
    <property type="entry name" value="NADH_UbQ_OxRdtase_chain2"/>
</dbReference>
<dbReference type="InterPro" id="IPR001750">
    <property type="entry name" value="ND/Mrp_TM"/>
</dbReference>
<dbReference type="PANTHER" id="PTHR46552">
    <property type="entry name" value="NADH-UBIQUINONE OXIDOREDUCTASE CHAIN 2"/>
    <property type="match status" value="1"/>
</dbReference>
<dbReference type="PANTHER" id="PTHR46552:SF1">
    <property type="entry name" value="NADH-UBIQUINONE OXIDOREDUCTASE CHAIN 2"/>
    <property type="match status" value="1"/>
</dbReference>
<dbReference type="Pfam" id="PF06444">
    <property type="entry name" value="NADH_dehy_S2_C"/>
    <property type="match status" value="1"/>
</dbReference>
<dbReference type="Pfam" id="PF00361">
    <property type="entry name" value="Proton_antipo_M"/>
    <property type="match status" value="1"/>
</dbReference>
<dbReference type="PRINTS" id="PR01436">
    <property type="entry name" value="NADHDHGNASE2"/>
</dbReference>
<feature type="chain" id="PRO_0000117614" description="NADH-ubiquinone oxidoreductase chain 2">
    <location>
        <begin position="1"/>
        <end position="349"/>
    </location>
</feature>
<feature type="transmembrane region" description="Helical" evidence="2">
    <location>
        <begin position="3"/>
        <end position="23"/>
    </location>
</feature>
<feature type="transmembrane region" description="Helical" evidence="2">
    <location>
        <begin position="66"/>
        <end position="86"/>
    </location>
</feature>
<feature type="transmembrane region" description="Helical" evidence="2">
    <location>
        <begin position="98"/>
        <end position="118"/>
    </location>
</feature>
<feature type="transmembrane region" description="Helical" evidence="2">
    <location>
        <begin position="139"/>
        <end position="159"/>
    </location>
</feature>
<feature type="transmembrane region" description="Helical" evidence="2">
    <location>
        <begin position="178"/>
        <end position="198"/>
    </location>
</feature>
<feature type="transmembrane region" description="Helical" evidence="2">
    <location>
        <begin position="199"/>
        <end position="219"/>
    </location>
</feature>
<feature type="transmembrane region" description="Helical" evidence="2">
    <location>
        <begin position="240"/>
        <end position="260"/>
    </location>
</feature>
<feature type="transmembrane region" description="Helical" evidence="2">
    <location>
        <begin position="274"/>
        <end position="294"/>
    </location>
</feature>
<feature type="transmembrane region" description="Helical" evidence="2">
    <location>
        <begin position="319"/>
        <end position="339"/>
    </location>
</feature>
<sequence>MNPYVLTILLSSLGLGTVLTFASSHWLLAWMGLEINTLAIIPIMAQQHHPRAIEATTKYFLTQATAAAMILFASTTNAWLVGEWEIHQLSHPLATTTVMLALALKLGLAPVHFWLPEVLQGLELTTGLILSTWQKLAPFALMIQVAPTINSSLLVTIGLLSTLVGGWGGLNQTQLRKILAYLPIAHLGWMVLILQFAPSLTLLSLSLYIVMTSSAFLTLKTNNSLTINTLATSWTKSPTLAALTALVLLSLGGLPPLSGFMPKWLILQELTKQGLPLSATLAAMTALLSLYFYLRLCYALTLTIYPNTLTATAPWRLNFTMITLPLSITTIMALGLLPLTPAVTAMLAL</sequence>
<accession>P48175</accession>